<keyword id="KW-0010">Activator</keyword>
<keyword id="KW-0025">Alternative splicing</keyword>
<keyword id="KW-0963">Cytoplasm</keyword>
<keyword id="KW-0217">Developmental protein</keyword>
<keyword id="KW-0221">Differentiation</keyword>
<keyword id="KW-0238">DNA-binding</keyword>
<keyword id="KW-1017">Isopeptide bond</keyword>
<keyword id="KW-0539">Nucleus</keyword>
<keyword id="KW-0597">Phosphoprotein</keyword>
<keyword id="KW-1185">Reference proteome</keyword>
<keyword id="KW-0677">Repeat</keyword>
<keyword id="KW-0804">Transcription</keyword>
<keyword id="KW-0805">Transcription regulation</keyword>
<keyword id="KW-0832">Ubl conjugation</keyword>
<sequence length="901" mass="95782">MGAASCEDEELEFKLVFGEEKEPPPLGPGGPGEELDSEDTPPCCRLALGEPLPYGAAPIGIPRPPPPRPGMHSPPPRPAPSPGTWESQPARSVRLGGPGGNAGGAGGGRVLECPSIRITSISPTPDPPTSLEDTSETWGDGSPRDYPPPEGFGGYREAGGQGGGAFFSPSPGSSSLSSWSFFSDASDEAALYAACDEVESELNEAASRFGLSSPLPSPRASPRPWTPEDPWSLYGPSSGGRAPEDSWLLLSAPGPVPASPRPASPCGKRRYSSSGTPSSASPALSRRGSLGEEGPEPPPPPPLPLVRDPSSPGPFDYVGAPPTESIPQKTRRTSSEQAVALPRSEEPPSCNGKLPSGTEDSVAAPGALRKEVAGMDYLAVPSPLAWSKARIGGHSPIFRTSALPPLDWPLPSQYEQLELRIEVQPRAHHRAHYETEGSRGAVKAAPGGHPVVKLLGYSEKPLTLQMFIGTADERSLRPHAFYQVHRITGKMVATASYEAVVSGTKVLEMTLLPENNMAANIDCAGILKLRNSDIELRKGETDIGRKNTRVRLVFRVHVPQGGGKVVSVQAASVPIECSQRSAQELPQVETYSPSACSVRGGEELVLTGSNFLPDSKVVFIERGPDGKLQWEEEAAVNRLQSSEVTLTLTIPEYSNKRVSRPVQVYFYVSNGRRKRSPTQSFKFLPVVFKEEPLPDSSLRGFPSTSGPPFGPDVDFSPPRPPYPSYPHEDPAYETPYLSEGFGYSTPALYPQTGPPPSYRSGLRMFPETGGTTGCARLPSVSFLPRPFPGDQYGGQGSSFALGLPFSPPAPFRPPLPSSPPLEDPFHPQSAIHPLPPEGYNEVGPGYTPGEGASEQEKARGGYSSGFRDSVPIQGITLEEVSEIIGRDLSGFPARPGEEPPA</sequence>
<organism>
    <name type="scientific">Mus musculus</name>
    <name type="common">Mouse</name>
    <dbReference type="NCBI Taxonomy" id="10090"/>
    <lineage>
        <taxon>Eukaryota</taxon>
        <taxon>Metazoa</taxon>
        <taxon>Chordata</taxon>
        <taxon>Craniata</taxon>
        <taxon>Vertebrata</taxon>
        <taxon>Euteleostomi</taxon>
        <taxon>Mammalia</taxon>
        <taxon>Eutheria</taxon>
        <taxon>Euarchontoglires</taxon>
        <taxon>Glires</taxon>
        <taxon>Rodentia</taxon>
        <taxon>Myomorpha</taxon>
        <taxon>Muroidea</taxon>
        <taxon>Muridae</taxon>
        <taxon>Murinae</taxon>
        <taxon>Mus</taxon>
        <taxon>Mus</taxon>
    </lineage>
</organism>
<feature type="chain" id="PRO_0000367433" description="Nuclear factor of activated T-cells, cytoplasmic 4">
    <location>
        <begin position="1"/>
        <end position="901"/>
    </location>
</feature>
<feature type="repeat" description="SP 1" evidence="4">
    <location>
        <begin position="213"/>
        <end position="229"/>
    </location>
</feature>
<feature type="repeat" description="SP 2; approximate" evidence="4">
    <location>
        <begin position="277"/>
        <end position="293"/>
    </location>
</feature>
<feature type="domain" description="RHD" evidence="5">
    <location>
        <begin position="401"/>
        <end position="582"/>
    </location>
</feature>
<feature type="domain" description="IPT/TIG" evidence="4">
    <location>
        <begin position="586"/>
        <end position="683"/>
    </location>
</feature>
<feature type="DNA-binding region" evidence="3">
    <location>
        <begin position="430"/>
        <end position="437"/>
    </location>
</feature>
<feature type="region of interest" description="Disordered" evidence="6">
    <location>
        <begin position="15"/>
        <end position="179"/>
    </location>
</feature>
<feature type="region of interest" description="Calcineurin-binding" evidence="3">
    <location>
        <begin position="114"/>
        <end position="119"/>
    </location>
</feature>
<feature type="region of interest" description="Disordered" evidence="6">
    <location>
        <begin position="203"/>
        <end position="362"/>
    </location>
</feature>
<feature type="region of interest" description="2 approximate SP repeats" evidence="4">
    <location>
        <begin position="213"/>
        <end position="293"/>
    </location>
</feature>
<feature type="region of interest" description="Disordered" evidence="6">
    <location>
        <begin position="695"/>
        <end position="721"/>
    </location>
</feature>
<feature type="region of interest" description="Disordered" evidence="6">
    <location>
        <begin position="827"/>
        <end position="869"/>
    </location>
</feature>
<feature type="short sequence motif" description="Nuclear localization signal" evidence="4">
    <location>
        <begin position="268"/>
        <end position="270"/>
    </location>
</feature>
<feature type="short sequence motif" description="Nuclear localization signal" evidence="4">
    <location>
        <begin position="672"/>
        <end position="674"/>
    </location>
</feature>
<feature type="compositionally biased region" description="Pro residues" evidence="6">
    <location>
        <begin position="61"/>
        <end position="81"/>
    </location>
</feature>
<feature type="compositionally biased region" description="Gly residues" evidence="6">
    <location>
        <begin position="96"/>
        <end position="109"/>
    </location>
</feature>
<feature type="compositionally biased region" description="Low complexity" evidence="6">
    <location>
        <begin position="114"/>
        <end position="123"/>
    </location>
</feature>
<feature type="compositionally biased region" description="Gly residues" evidence="6">
    <location>
        <begin position="151"/>
        <end position="165"/>
    </location>
</feature>
<feature type="compositionally biased region" description="Low complexity" evidence="6">
    <location>
        <begin position="166"/>
        <end position="179"/>
    </location>
</feature>
<feature type="compositionally biased region" description="Pro residues" evidence="6">
    <location>
        <begin position="215"/>
        <end position="227"/>
    </location>
</feature>
<feature type="compositionally biased region" description="Pro residues" evidence="6">
    <location>
        <begin position="254"/>
        <end position="263"/>
    </location>
</feature>
<feature type="compositionally biased region" description="Low complexity" evidence="6">
    <location>
        <begin position="272"/>
        <end position="288"/>
    </location>
</feature>
<feature type="modified residue" description="Phosphoserine; by MAPK7 and MAPK14" evidence="16">
    <location>
        <position position="168"/>
    </location>
</feature>
<feature type="modified residue" description="Phosphoserine; by MAPK7 and MAPK14" evidence="16">
    <location>
        <position position="170"/>
    </location>
</feature>
<feature type="modified residue" description="Phosphoserine; by MAPK8 and MAPK9" evidence="3">
    <location>
        <position position="213"/>
    </location>
</feature>
<feature type="modified residue" description="Phosphoserine; by MAPK8 and MAPK9" evidence="3">
    <location>
        <position position="217"/>
    </location>
</feature>
<feature type="modified residue" description="Phosphoserine" evidence="30">
    <location>
        <position position="289"/>
    </location>
</feature>
<feature type="modified residue" description="Phosphoserine; by RPS6KA3" evidence="3">
    <location>
        <position position="334"/>
    </location>
</feature>
<feature type="modified residue" description="Phosphoserine" evidence="3">
    <location>
        <position position="344"/>
    </location>
</feature>
<feature type="cross-link" description="Glycyl lysine isopeptide (Lys-Gly) (interchain with G-Cter in SUMO2)" evidence="3">
    <location>
        <position position="689"/>
    </location>
</feature>
<feature type="splice variant" id="VSP_053054" description="In isoform 2." evidence="25">
    <original>VSEIIGRDLSGFPAR</original>
    <variation>GGCGTGGCECK</variation>
    <location>
        <begin position="880"/>
        <end position="894"/>
    </location>
</feature>
<feature type="splice variant" id="VSP_053055" description="In isoform 2." evidence="25">
    <location>
        <begin position="895"/>
        <end position="901"/>
    </location>
</feature>
<feature type="sequence conflict" description="In Ref. 5; AAH28928." evidence="27" ref="5">
    <original>S</original>
    <variation>P</variation>
    <location>
        <position position="135"/>
    </location>
</feature>
<feature type="sequence conflict" description="In Ref. 1; AAG39446/AAF98174." evidence="27" ref="1">
    <original>AV</original>
    <variation>TM</variation>
    <location>
        <begin position="379"/>
        <end position="380"/>
    </location>
</feature>
<feature type="sequence conflict" description="In Ref. 1; AAG39446/AAF98174." evidence="27" ref="1">
    <original>HS</original>
    <variation>QT</variation>
    <location>
        <begin position="394"/>
        <end position="395"/>
    </location>
</feature>
<feature type="sequence conflict" description="In Ref. 5; AAH28928." evidence="27" ref="5">
    <original>G</original>
    <variation>S</variation>
    <location>
        <position position="562"/>
    </location>
</feature>
<feature type="sequence conflict" description="In Ref. 1; AAG39446/AAF98174." evidence="27" ref="1">
    <original>ET</original>
    <variation>GD</variation>
    <location>
        <begin position="589"/>
        <end position="590"/>
    </location>
</feature>
<feature type="sequence conflict" description="In Ref. 1; AAG39446/AAF98174." evidence="27" ref="1">
    <original>V</original>
    <variation>I</variation>
    <location>
        <position position="662"/>
    </location>
</feature>
<feature type="sequence conflict" description="In Ref. 1; AAG39446/AAF98174." evidence="27" ref="1">
    <original>P</original>
    <variation>L</variation>
    <location>
        <position position="730"/>
    </location>
</feature>
<dbReference type="EMBL" id="AF283284">
    <property type="protein sequence ID" value="AAF98174.1"/>
    <property type="molecule type" value="mRNA"/>
</dbReference>
<dbReference type="EMBL" id="AF309389">
    <property type="protein sequence ID" value="AAG39446.1"/>
    <property type="molecule type" value="Genomic_DNA"/>
</dbReference>
<dbReference type="EMBL" id="AF309388">
    <property type="protein sequence ID" value="AAG39446.1"/>
    <property type="status" value="JOINED"/>
    <property type="molecule type" value="Genomic_DNA"/>
</dbReference>
<dbReference type="EMBL" id="EU887656">
    <property type="protein sequence ID" value="ACG55676.1"/>
    <property type="molecule type" value="mRNA"/>
</dbReference>
<dbReference type="EMBL" id="EU887657">
    <property type="protein sequence ID" value="ACG55677.1"/>
    <property type="molecule type" value="mRNA"/>
</dbReference>
<dbReference type="EMBL" id="AK159078">
    <property type="protein sequence ID" value="BAE34797.1"/>
    <property type="molecule type" value="mRNA"/>
</dbReference>
<dbReference type="EMBL" id="CH466535">
    <property type="protein sequence ID" value="EDL36234.1"/>
    <property type="molecule type" value="Genomic_DNA"/>
</dbReference>
<dbReference type="EMBL" id="BC028928">
    <property type="protein sequence ID" value="AAH28928.1"/>
    <property type="molecule type" value="mRNA"/>
</dbReference>
<dbReference type="CCDS" id="CCDS27132.1">
    <molecule id="Q8K120-1"/>
</dbReference>
<dbReference type="CCDS" id="CCDS49500.1">
    <molecule id="Q8K120-2"/>
</dbReference>
<dbReference type="RefSeq" id="NP_001161818.1">
    <molecule id="Q8K120-2"/>
    <property type="nucleotide sequence ID" value="NM_001168346.1"/>
</dbReference>
<dbReference type="RefSeq" id="NP_076188.3">
    <molecule id="Q8K120-1"/>
    <property type="nucleotide sequence ID" value="NM_023699.3"/>
</dbReference>
<dbReference type="SMR" id="Q8K120"/>
<dbReference type="BioGRID" id="215821">
    <property type="interactions" value="2"/>
</dbReference>
<dbReference type="FunCoup" id="Q8K120">
    <property type="interactions" value="1218"/>
</dbReference>
<dbReference type="STRING" id="10090.ENSMUSP00000024179"/>
<dbReference type="GlyGen" id="Q8K120">
    <property type="glycosylation" value="3 sites"/>
</dbReference>
<dbReference type="iPTMnet" id="Q8K120"/>
<dbReference type="PhosphoSitePlus" id="Q8K120"/>
<dbReference type="SwissPalm" id="Q8K120"/>
<dbReference type="jPOST" id="Q8K120"/>
<dbReference type="PaxDb" id="10090-ENSMUSP00000024179"/>
<dbReference type="PeptideAtlas" id="Q8K120"/>
<dbReference type="ProteomicsDB" id="252958">
    <molecule id="Q8K120-1"/>
</dbReference>
<dbReference type="ProteomicsDB" id="252959">
    <molecule id="Q8K120-2"/>
</dbReference>
<dbReference type="Pumba" id="Q8K120"/>
<dbReference type="Antibodypedia" id="9248">
    <property type="antibodies" value="482 antibodies from 37 providers"/>
</dbReference>
<dbReference type="DNASU" id="73181"/>
<dbReference type="Ensembl" id="ENSMUST00000024179.6">
    <molecule id="Q8K120-1"/>
    <property type="protein sequence ID" value="ENSMUSP00000024179.6"/>
    <property type="gene ID" value="ENSMUSG00000023411.13"/>
</dbReference>
<dbReference type="Ensembl" id="ENSMUST00000172271.9">
    <molecule id="Q8K120-2"/>
    <property type="protein sequence ID" value="ENSMUSP00000132763.2"/>
    <property type="gene ID" value="ENSMUSG00000023411.13"/>
</dbReference>
<dbReference type="GeneID" id="73181"/>
<dbReference type="KEGG" id="mmu:73181"/>
<dbReference type="UCSC" id="uc007uax.2">
    <molecule id="Q8K120-1"/>
    <property type="organism name" value="mouse"/>
</dbReference>
<dbReference type="UCSC" id="uc011zlq.1">
    <molecule id="Q8K120-2"/>
    <property type="organism name" value="mouse"/>
</dbReference>
<dbReference type="AGR" id="MGI:1920431"/>
<dbReference type="CTD" id="4776"/>
<dbReference type="MGI" id="MGI:1920431">
    <property type="gene designation" value="Nfatc4"/>
</dbReference>
<dbReference type="VEuPathDB" id="HostDB:ENSMUSG00000023411"/>
<dbReference type="eggNOG" id="ENOG502RIHQ">
    <property type="taxonomic scope" value="Eukaryota"/>
</dbReference>
<dbReference type="GeneTree" id="ENSGT00940000160923"/>
<dbReference type="HOGENOM" id="CLU_010185_2_0_1"/>
<dbReference type="InParanoid" id="Q8K120"/>
<dbReference type="OMA" id="NMTAIDC"/>
<dbReference type="OrthoDB" id="5346094at2759"/>
<dbReference type="PhylomeDB" id="Q8K120"/>
<dbReference type="TreeFam" id="TF326480"/>
<dbReference type="BioGRID-ORCS" id="73181">
    <property type="hits" value="2 hits in 79 CRISPR screens"/>
</dbReference>
<dbReference type="PRO" id="PR:Q8K120"/>
<dbReference type="Proteomes" id="UP000000589">
    <property type="component" value="Chromosome 14"/>
</dbReference>
<dbReference type="RNAct" id="Q8K120">
    <property type="molecule type" value="protein"/>
</dbReference>
<dbReference type="Bgee" id="ENSMUSG00000023411">
    <property type="expression patterns" value="Expressed in gastrula and 193 other cell types or tissues"/>
</dbReference>
<dbReference type="ExpressionAtlas" id="Q8K120">
    <property type="expression patterns" value="baseline and differential"/>
</dbReference>
<dbReference type="GO" id="GO:0005737">
    <property type="term" value="C:cytoplasm"/>
    <property type="evidence" value="ECO:0000314"/>
    <property type="project" value="UniProtKB"/>
</dbReference>
<dbReference type="GO" id="GO:0005829">
    <property type="term" value="C:cytosol"/>
    <property type="evidence" value="ECO:0000314"/>
    <property type="project" value="UniProtKB"/>
</dbReference>
<dbReference type="GO" id="GO:0016607">
    <property type="term" value="C:nuclear speck"/>
    <property type="evidence" value="ECO:0007669"/>
    <property type="project" value="Ensembl"/>
</dbReference>
<dbReference type="GO" id="GO:0005634">
    <property type="term" value="C:nucleus"/>
    <property type="evidence" value="ECO:0000314"/>
    <property type="project" value="UniProtKB"/>
</dbReference>
<dbReference type="GO" id="GO:0005667">
    <property type="term" value="C:transcription regulator complex"/>
    <property type="evidence" value="ECO:0000314"/>
    <property type="project" value="MGI"/>
</dbReference>
<dbReference type="GO" id="GO:0003700">
    <property type="term" value="F:DNA-binding transcription factor activity"/>
    <property type="evidence" value="ECO:0000314"/>
    <property type="project" value="ParkinsonsUK-UCL"/>
</dbReference>
<dbReference type="GO" id="GO:0000981">
    <property type="term" value="F:DNA-binding transcription factor activity, RNA polymerase II-specific"/>
    <property type="evidence" value="ECO:0000314"/>
    <property type="project" value="MGI"/>
</dbReference>
<dbReference type="GO" id="GO:0001227">
    <property type="term" value="F:DNA-binding transcription repressor activity, RNA polymerase II-specific"/>
    <property type="evidence" value="ECO:0000314"/>
    <property type="project" value="NTNU_SB"/>
</dbReference>
<dbReference type="GO" id="GO:0000978">
    <property type="term" value="F:RNA polymerase II cis-regulatory region sequence-specific DNA binding"/>
    <property type="evidence" value="ECO:0000314"/>
    <property type="project" value="NTNU_SB"/>
</dbReference>
<dbReference type="GO" id="GO:0000976">
    <property type="term" value="F:transcription cis-regulatory region binding"/>
    <property type="evidence" value="ECO:0000314"/>
    <property type="project" value="UniProtKB"/>
</dbReference>
<dbReference type="GO" id="GO:0031547">
    <property type="term" value="P:brain-derived neurotrophic factor receptor signaling pathway"/>
    <property type="evidence" value="ECO:0000315"/>
    <property type="project" value="UniProtKB"/>
</dbReference>
<dbReference type="GO" id="GO:0001569">
    <property type="term" value="P:branching involved in blood vessel morphogenesis"/>
    <property type="evidence" value="ECO:0000316"/>
    <property type="project" value="MGI"/>
</dbReference>
<dbReference type="GO" id="GO:0033173">
    <property type="term" value="P:calcineurin-NFAT signaling cascade"/>
    <property type="evidence" value="ECO:0000316"/>
    <property type="project" value="MGI"/>
</dbReference>
<dbReference type="GO" id="GO:0045333">
    <property type="term" value="P:cellular respiration"/>
    <property type="evidence" value="ECO:0000314"/>
    <property type="project" value="MGI"/>
</dbReference>
<dbReference type="GO" id="GO:0071285">
    <property type="term" value="P:cellular response to lithium ion"/>
    <property type="evidence" value="ECO:0000314"/>
    <property type="project" value="MGI"/>
</dbReference>
<dbReference type="GO" id="GO:0034644">
    <property type="term" value="P:cellular response to UV"/>
    <property type="evidence" value="ECO:0000316"/>
    <property type="project" value="MGI"/>
</dbReference>
<dbReference type="GO" id="GO:0048813">
    <property type="term" value="P:dendrite morphogenesis"/>
    <property type="evidence" value="ECO:0000315"/>
    <property type="project" value="MGI"/>
</dbReference>
<dbReference type="GO" id="GO:0007507">
    <property type="term" value="P:heart development"/>
    <property type="evidence" value="ECO:0000316"/>
    <property type="project" value="MGI"/>
</dbReference>
<dbReference type="GO" id="GO:0008630">
    <property type="term" value="P:intrinsic apoptotic signaling pathway in response to DNA damage"/>
    <property type="evidence" value="ECO:0000315"/>
    <property type="project" value="MGI"/>
</dbReference>
<dbReference type="GO" id="GO:0007616">
    <property type="term" value="P:long-term memory"/>
    <property type="evidence" value="ECO:0000315"/>
    <property type="project" value="UniProtKB"/>
</dbReference>
<dbReference type="GO" id="GO:0060291">
    <property type="term" value="P:long-term synaptic potentiation"/>
    <property type="evidence" value="ECO:0000315"/>
    <property type="project" value="UniProtKB"/>
</dbReference>
<dbReference type="GO" id="GO:0050774">
    <property type="term" value="P:negative regulation of dendrite morphogenesis"/>
    <property type="evidence" value="ECO:0000315"/>
    <property type="project" value="MGI"/>
</dbReference>
<dbReference type="GO" id="GO:1902894">
    <property type="term" value="P:negative regulation of miRNA transcription"/>
    <property type="evidence" value="ECO:0007669"/>
    <property type="project" value="Ensembl"/>
</dbReference>
<dbReference type="GO" id="GO:0043524">
    <property type="term" value="P:negative regulation of neuron apoptotic process"/>
    <property type="evidence" value="ECO:0000315"/>
    <property type="project" value="UniProtKB"/>
</dbReference>
<dbReference type="GO" id="GO:2000297">
    <property type="term" value="P:negative regulation of synapse maturation"/>
    <property type="evidence" value="ECO:0000315"/>
    <property type="project" value="MGI"/>
</dbReference>
<dbReference type="GO" id="GO:0000122">
    <property type="term" value="P:negative regulation of transcription by RNA polymerase II"/>
    <property type="evidence" value="ECO:0000314"/>
    <property type="project" value="NTNU_SB"/>
</dbReference>
<dbReference type="GO" id="GO:0030178">
    <property type="term" value="P:negative regulation of Wnt signaling pathway"/>
    <property type="evidence" value="ECO:0000314"/>
    <property type="project" value="ParkinsonsUK-UCL"/>
</dbReference>
<dbReference type="GO" id="GO:0051402">
    <property type="term" value="P:neuron apoptotic process"/>
    <property type="evidence" value="ECO:0000315"/>
    <property type="project" value="MGI"/>
</dbReference>
<dbReference type="GO" id="GO:2001235">
    <property type="term" value="P:positive regulation of apoptotic signaling pathway"/>
    <property type="evidence" value="ECO:0000315"/>
    <property type="project" value="MGI"/>
</dbReference>
<dbReference type="GO" id="GO:0043525">
    <property type="term" value="P:positive regulation of neuron apoptotic process"/>
    <property type="evidence" value="ECO:0000315"/>
    <property type="project" value="MGI"/>
</dbReference>
<dbReference type="GO" id="GO:0045944">
    <property type="term" value="P:positive regulation of transcription by RNA polymerase II"/>
    <property type="evidence" value="ECO:0000314"/>
    <property type="project" value="UniProtKB"/>
</dbReference>
<dbReference type="GO" id="GO:0032760">
    <property type="term" value="P:positive regulation of tumor necrosis factor production"/>
    <property type="evidence" value="ECO:0000315"/>
    <property type="project" value="MGI"/>
</dbReference>
<dbReference type="GO" id="GO:0006355">
    <property type="term" value="P:regulation of DNA-templated transcription"/>
    <property type="evidence" value="ECO:0000314"/>
    <property type="project" value="MGI"/>
</dbReference>
<dbReference type="GO" id="GO:0060074">
    <property type="term" value="P:synapse maturation"/>
    <property type="evidence" value="ECO:0000315"/>
    <property type="project" value="MGI"/>
</dbReference>
<dbReference type="GO" id="GO:0006366">
    <property type="term" value="P:transcription by RNA polymerase II"/>
    <property type="evidence" value="ECO:0000315"/>
    <property type="project" value="MGI"/>
</dbReference>
<dbReference type="GO" id="GO:0097084">
    <property type="term" value="P:vascular associated smooth muscle cell development"/>
    <property type="evidence" value="ECO:0000316"/>
    <property type="project" value="MGI"/>
</dbReference>
<dbReference type="GO" id="GO:0035886">
    <property type="term" value="P:vascular associated smooth muscle cell differentiation"/>
    <property type="evidence" value="ECO:0000316"/>
    <property type="project" value="MGI"/>
</dbReference>
<dbReference type="CDD" id="cd01178">
    <property type="entry name" value="IPT_NFAT"/>
    <property type="match status" value="1"/>
</dbReference>
<dbReference type="CDD" id="cd07881">
    <property type="entry name" value="RHD-n_NFAT"/>
    <property type="match status" value="1"/>
</dbReference>
<dbReference type="FunFam" id="2.60.40.10:FF:000040">
    <property type="entry name" value="Nuclear factor of activated T-cells, cytoplasmic, calcineurin-dependent 2"/>
    <property type="match status" value="1"/>
</dbReference>
<dbReference type="FunFam" id="2.60.40.340:FF:000001">
    <property type="entry name" value="Nuclear factor of activated T-cells, cytoplasmic, calcineurin-dependent 2"/>
    <property type="match status" value="1"/>
</dbReference>
<dbReference type="Gene3D" id="2.60.40.10">
    <property type="entry name" value="Immunoglobulins"/>
    <property type="match status" value="1"/>
</dbReference>
<dbReference type="Gene3D" id="2.60.40.340">
    <property type="entry name" value="Rel homology domain (RHD), DNA-binding domain"/>
    <property type="match status" value="1"/>
</dbReference>
<dbReference type="InterPro" id="IPR013783">
    <property type="entry name" value="Ig-like_fold"/>
</dbReference>
<dbReference type="InterPro" id="IPR014756">
    <property type="entry name" value="Ig_E-set"/>
</dbReference>
<dbReference type="InterPro" id="IPR002909">
    <property type="entry name" value="IPT_dom"/>
</dbReference>
<dbReference type="InterPro" id="IPR008366">
    <property type="entry name" value="NFAT"/>
</dbReference>
<dbReference type="InterPro" id="IPR008967">
    <property type="entry name" value="p53-like_TF_DNA-bd_sf"/>
</dbReference>
<dbReference type="InterPro" id="IPR032397">
    <property type="entry name" value="RHD_dimer"/>
</dbReference>
<dbReference type="InterPro" id="IPR011539">
    <property type="entry name" value="RHD_DNA_bind_dom"/>
</dbReference>
<dbReference type="InterPro" id="IPR037059">
    <property type="entry name" value="RHD_DNA_bind_dom_sf"/>
</dbReference>
<dbReference type="PANTHER" id="PTHR12533">
    <property type="entry name" value="NFAT"/>
    <property type="match status" value="1"/>
</dbReference>
<dbReference type="PANTHER" id="PTHR12533:SF11">
    <property type="entry name" value="NUCLEAR FACTOR OF ACTIVATED T-CELLS, CYTOPLASMIC 4"/>
    <property type="match status" value="1"/>
</dbReference>
<dbReference type="Pfam" id="PF16179">
    <property type="entry name" value="RHD_dimer"/>
    <property type="match status" value="1"/>
</dbReference>
<dbReference type="Pfam" id="PF00554">
    <property type="entry name" value="RHD_DNA_bind"/>
    <property type="match status" value="1"/>
</dbReference>
<dbReference type="PRINTS" id="PR01789">
    <property type="entry name" value="NUCFACTORATC"/>
</dbReference>
<dbReference type="SMART" id="SM00429">
    <property type="entry name" value="IPT"/>
    <property type="match status" value="1"/>
</dbReference>
<dbReference type="SUPFAM" id="SSF81296">
    <property type="entry name" value="E set domains"/>
    <property type="match status" value="1"/>
</dbReference>
<dbReference type="SUPFAM" id="SSF49417">
    <property type="entry name" value="p53-like transcription factors"/>
    <property type="match status" value="1"/>
</dbReference>
<dbReference type="PROSITE" id="PS50254">
    <property type="entry name" value="REL_2"/>
    <property type="match status" value="1"/>
</dbReference>
<accession>Q8K120</accession>
<accession>B5B2X2</accession>
<accession>Q3TXW7</accession>
<accession>Q9EP91</accession>
<comment type="function">
    <text evidence="1 3 9 12 14 17 19 23 28">Ca(2+)-regulated transcription factor that is involved in several processes, including the development and function of the immune, cardiovascular, musculoskeletal, and nervous systems. Involved in T-cell activation, stimulating the transcription of cytokine genes, including that of IL2 and IL4 (PubMed:17198697). Following JAK/STAT signaling activation and as part of a complex with NFATC3 and STAT3, binds to the alpha-beta E4 promoter region of CRYAB and activates transcription in cardiomyocytes (PubMed:19538478). Along with NFATC3, involved in embryonic heart development (PubMed:12750314, PubMed:17198697). Involved in mitochondrial energy metabolism required for cardiac morphogenesis and function (PubMed:12750314). Transactivates many genes involved in heart physiology. Along with GATA4, binds to and activates NPPB/BNP promoter (PubMed:9568714). Activates NPPA/ANP/ANF and MYH7/beta-MHC transcription (By similarity). Binds to and transactivates AGTR2 gene promoter (PubMed:17198697). Involved in the regulation of adult hippocampal neurogenesis. Involved in BDNF-driven pro-survival signaling in hippocampal adult-born neurons. Involved in the formation of long-term spatial memory and long-term potentiation (PubMed:22586092). In cochlear nucleus neurons, may play a role in deafferentation-induced apoptosis during a developmental critical period when auditory neurons depend on afferent input for survival (PubMed:18354019). Binds to and activates the BACE1/Beta-secretase 1 promoter, hence may regulate the proteolytic processing of the amyloid precursor protein (APP). Plays a role in adipocyte differentiation. May be involved in myoblast differentiation into myotubes (By similarity). Binds the consensus DNA sequence 5'-GGAAAAT-3' (Probable). In the presence of CREBBP, activates TNF transcription. Binds to PPARG gene promoter and regulates its activity (By similarity). Binds to PPARG and REG3G gene promoters (PubMed:17198697).</text>
</comment>
<comment type="subunit">
    <text evidence="1 3 17 21 23 28">Member of the multicomponent NFATC transcription complex that consists of at least two components, a pre-existing cytoplasmic component NFATC2 and an inducible nuclear component NFATC1. Other NFAT proteins, such as NFATC3, or members of the activating protein-1 (AP-1) family and MAF can also bind the complex. NFAT proteins can bind DNA as monomers or dimers (Probable). Component of a promoter-binding complex composed of STAT3, NFATC3 and NFATC4; complex formation is enhanced by calcineurin (PubMed:19538478). Interacts with CREBBP; this interaction potentiates transcription activation (By similarity). Interacts with MAPK8/JNK1 and MAPK9/JNK2 (By similarity). Interacts with GATA4 (via the second Zn finger) (PubMed:9568714). Interacts (via N-terminus) with IRAK1 (via C-terminus) (By similarity). Interacts with RPS6KA3 (By similarity). Interacts with HOMER1, HOMER2 and HOMER3; this interaction competes with calcineurin/PPP3CA-binding and hence prevents NFATC4 dephosphorylation and activation (By similarity). Interacts with ESR1 and ESR2; this interaction decreases NFATC4 transcriptional activity (By similarity). Interacts with MTOR and MAPK7/ERK5 (By similarity). Interacts with TRIM17; this interaction prevents NFATC3 nuclear localization (PubMed:25215946). Interacts with TCF25 (via C-terminus); the interaction leads to suppression of NFATC4 transcription factor activity and is reduced following stimulation with angiotensin-2 (By similarity).</text>
</comment>
<comment type="subcellular location">
    <subcellularLocation>
        <location evidence="14 19 20">Cytoplasm</location>
    </subcellularLocation>
    <subcellularLocation>
        <location evidence="14 19 20 21">Nucleus</location>
    </subcellularLocation>
    <text evidence="3">When hyperphosphorylated, localizes in the cytosol. When intracellular Ca(2+) levels increase, dephosphorylation by calcineurin/PPP3CA leads to translocation into the nucleus (By similarity). MAPK7/ERK5 and MTOR regulate NFATC4 nuclear export through phosphorylation at Ser-168 and Ser-170 (By similarity).</text>
</comment>
<comment type="alternative products">
    <event type="alternative splicing"/>
    <isoform>
        <id>Q8K120-1</id>
        <name evidence="7 10 11 15">1</name>
        <name evidence="15">I-IXL</name>
        <sequence type="displayed"/>
    </isoform>
    <isoform>
        <id>Q8K120-2</id>
        <name evidence="15">2</name>
        <name evidence="15">I-IXi</name>
        <sequence type="described" ref="VSP_053054 VSP_053055"/>
    </isoform>
</comment>
<comment type="tissue specificity">
    <text evidence="8 13 14 15 17 18 19 22">Widely expressed (PubMed:18675896). In the brain, expressed in neurons (PubMed:18675896, PubMed:25663301). Expressed in the hippocampus (at protein level) (PubMed:25663301). In the hippocampus, expressed in both the CA1-CA3 pyramidal cells and the dentate gyrus granular cells (PubMed:22586092). Expressed in a subset of hippocampal cells representing adult-born neurons (at protein level) (PubMed:22586092). Expressed in the submandibular gland (at protein level) (PubMed:21435446). In the olfactory system, expressed at low levels in the glomerular and granular layers and in the mitral cell layer (PubMed:18675896). In the cerebellum, expressed at moderate levels in granular neurons (PubMed:18675896). Expressed at moderate levels in the choroid plexus and ependymal cells (PubMed:18675896). Expressed in neurons of the cochlear nucleus (at protein level) (PubMed:18354019). Expressed at low levels in the heart (at protein level) (PubMed:12370307). Expressed in ventricular cardiomyocytes (at protein level) (PubMed:19538478). Expressed in the lung (PubMed:17579027).</text>
</comment>
<comment type="developmental stage">
    <text evidence="12 15 19">Expressed at high levels in the embryonic brain at 13.5 dpc (PubMed:18675896, PubMed:22586092). Expression decreases thereafter, reaching the lowest levels at postnatal day 14 and remaining unchanged in adulthood (PubMed:18675896). Expressed in the developing heart at 13.5 and 16.5 dpc, during the transition from spongy to compact myocardium (PubMed:17198697).</text>
</comment>
<comment type="induction">
    <text evidence="17 19">Up-regulated by BDNF (PubMed:22586092). Induced by calcineurin in ventricular tissue (PubMed:19538478).</text>
</comment>
<comment type="domain">
    <text evidence="2">Rel similarity domain (RSD) or Rel homology domain (RHD) allows DNA-binding and cooperative interactions with AP-1 factors.</text>
</comment>
<comment type="PTM">
    <text evidence="1 3 16">Phosphorylated by NFATC-kinases; dephosphorylated by calcineurin/PPP3CA. Phosphorylated on Ser-168 and Ser-170 by MTOR, IRAK1, MAPK7/ERK5 and MAPK14/p38, on Ser-213 and Ser-217 by MAPK8 and MAPK9, and on Ser-289 and Ser-344 by RPS6KA3 (PubMed:18691762). Phosphorylated by GSK3B (By similarity). Phosphorylation by GSK3B markedly increases NFATC4 ubiquitination (By similarity). Phosphorylation by MAPK8/JNK1, MAPK9/JNK2 and RPS6KA3 may stimulate NFATC4 transcriptional activity. Phosphorylation at Ser-168 and Ser-170 is stimulated by UV irradiation (By similarity).</text>
</comment>
<comment type="PTM">
    <text evidence="3">Ubiquitinated, leading to degradation by the proteasome. Ubiquitination may be stimulated by GSK3B-dependent phosphorylation. Polyubiquitin linkage mainly occurs through 'Lys-48'.</text>
</comment>
<comment type="disruption phenotype">
    <text evidence="8 9 19">No visible phenotype (PubMed:12370307). However, adult mutant animals show selective impairment in the formation of spatial long-term memory and long-term potentiation. They exhibit a reduced number of hippocampal adult-born neurons compared to wild-type littermates (PubMed:22586092). Simultaneous knockout of NFATC3 and NFATC4 results in embryonic death soon after 10.5 dpc. Embryos appear normal at 9.5 dpc. At 10.5 dpc, they exhibit defects in cardiac development, including dilated thin translucent hearts, pericardial effusion and anemia. Despite a mild generalized developmental delay, the heads, tails, and limb buds are well developed. By 11.5 dpc, mutant embryos are either necrotic or resorbed (PubMed:12750314).</text>
</comment>
<name>NFAC4_MOUSE</name>
<proteinExistence type="evidence at protein level"/>
<evidence type="ECO:0000250" key="1">
    <source>
        <dbReference type="UniProtKB" id="D3Z9H7"/>
    </source>
</evidence>
<evidence type="ECO:0000250" key="2">
    <source>
        <dbReference type="UniProtKB" id="O95644"/>
    </source>
</evidence>
<evidence type="ECO:0000250" key="3">
    <source>
        <dbReference type="UniProtKB" id="Q14934"/>
    </source>
</evidence>
<evidence type="ECO:0000255" key="4"/>
<evidence type="ECO:0000255" key="5">
    <source>
        <dbReference type="PROSITE-ProRule" id="PRU00265"/>
    </source>
</evidence>
<evidence type="ECO:0000256" key="6">
    <source>
        <dbReference type="SAM" id="MobiDB-lite"/>
    </source>
</evidence>
<evidence type="ECO:0000269" key="7">
    <source>
    </source>
</evidence>
<evidence type="ECO:0000269" key="8">
    <source>
    </source>
</evidence>
<evidence type="ECO:0000269" key="9">
    <source>
    </source>
</evidence>
<evidence type="ECO:0000269" key="10">
    <source>
    </source>
</evidence>
<evidence type="ECO:0000269" key="11">
    <source>
    </source>
</evidence>
<evidence type="ECO:0000269" key="12">
    <source>
    </source>
</evidence>
<evidence type="ECO:0000269" key="13">
    <source>
    </source>
</evidence>
<evidence type="ECO:0000269" key="14">
    <source>
    </source>
</evidence>
<evidence type="ECO:0000269" key="15">
    <source>
    </source>
</evidence>
<evidence type="ECO:0000269" key="16">
    <source>
    </source>
</evidence>
<evidence type="ECO:0000269" key="17">
    <source>
    </source>
</evidence>
<evidence type="ECO:0000269" key="18">
    <source>
    </source>
</evidence>
<evidence type="ECO:0000269" key="19">
    <source>
    </source>
</evidence>
<evidence type="ECO:0000269" key="20">
    <source>
    </source>
</evidence>
<evidence type="ECO:0000269" key="21">
    <source>
    </source>
</evidence>
<evidence type="ECO:0000269" key="22">
    <source>
    </source>
</evidence>
<evidence type="ECO:0000269" key="23">
    <source>
    </source>
</evidence>
<evidence type="ECO:0000303" key="24">
    <source>
    </source>
</evidence>
<evidence type="ECO:0000303" key="25">
    <source>
    </source>
</evidence>
<evidence type="ECO:0000303" key="26">
    <source>
    </source>
</evidence>
<evidence type="ECO:0000305" key="27"/>
<evidence type="ECO:0000305" key="28">
    <source>
    </source>
</evidence>
<evidence type="ECO:0000312" key="29">
    <source>
        <dbReference type="MGI" id="MGI:1920431"/>
    </source>
</evidence>
<evidence type="ECO:0007744" key="30">
    <source>
    </source>
</evidence>
<protein>
    <recommendedName>
        <fullName evidence="3">Nuclear factor of activated T-cells, cytoplasmic 4</fullName>
        <shortName evidence="3">NF-ATc4</shortName>
        <shortName evidence="24">NFATc4</shortName>
    </recommendedName>
    <alternativeName>
        <fullName evidence="25">T-cell transcription factor NFAT3</fullName>
        <shortName evidence="26">NF-AT3</shortName>
    </alternativeName>
</protein>
<gene>
    <name evidence="29" type="primary">Nfatc4</name>
    <name evidence="25" type="synonym">Nfat3</name>
</gene>
<reference key="1">
    <citation type="journal article" date="2001" name="Proc. Natl. Acad. Sci. U.S.A.">
        <title>Evolutionary relationships among Rel domains indicate functional diversification by recombination.</title>
        <authorList>
            <person name="Graef I.A."/>
            <person name="Gastier J.M."/>
            <person name="Francke U."/>
            <person name="Crabtree G.R."/>
        </authorList>
    </citation>
    <scope>NUCLEOTIDE SEQUENCE [GENOMIC DNA / MRNA] (ISOFORM 1)</scope>
    <source>
        <strain>129/SvEv</strain>
    </source>
</reference>
<reference key="2">
    <citation type="journal article" date="2008" name="Genomics">
        <title>Alternative splicing and expression of human and mouse NFAT genes.</title>
        <authorList>
            <person name="Vihma H."/>
            <person name="Pruunsild P."/>
            <person name="Timmusk T."/>
        </authorList>
    </citation>
    <scope>NUCLEOTIDE SEQUENCE [MRNA] (ISOFORMS 1 AND 2)</scope>
    <scope>TISSUE SPECIFICITY</scope>
    <scope>DEVELOPMENTAL STAGE</scope>
    <source>
        <strain>C57BL/6J</strain>
    </source>
</reference>
<reference key="3">
    <citation type="journal article" date="2005" name="Science">
        <title>The transcriptional landscape of the mammalian genome.</title>
        <authorList>
            <person name="Carninci P."/>
            <person name="Kasukawa T."/>
            <person name="Katayama S."/>
            <person name="Gough J."/>
            <person name="Frith M.C."/>
            <person name="Maeda N."/>
            <person name="Oyama R."/>
            <person name="Ravasi T."/>
            <person name="Lenhard B."/>
            <person name="Wells C."/>
            <person name="Kodzius R."/>
            <person name="Shimokawa K."/>
            <person name="Bajic V.B."/>
            <person name="Brenner S.E."/>
            <person name="Batalov S."/>
            <person name="Forrest A.R."/>
            <person name="Zavolan M."/>
            <person name="Davis M.J."/>
            <person name="Wilming L.G."/>
            <person name="Aidinis V."/>
            <person name="Allen J.E."/>
            <person name="Ambesi-Impiombato A."/>
            <person name="Apweiler R."/>
            <person name="Aturaliya R.N."/>
            <person name="Bailey T.L."/>
            <person name="Bansal M."/>
            <person name="Baxter L."/>
            <person name="Beisel K.W."/>
            <person name="Bersano T."/>
            <person name="Bono H."/>
            <person name="Chalk A.M."/>
            <person name="Chiu K.P."/>
            <person name="Choudhary V."/>
            <person name="Christoffels A."/>
            <person name="Clutterbuck D.R."/>
            <person name="Crowe M.L."/>
            <person name="Dalla E."/>
            <person name="Dalrymple B.P."/>
            <person name="de Bono B."/>
            <person name="Della Gatta G."/>
            <person name="di Bernardo D."/>
            <person name="Down T."/>
            <person name="Engstrom P."/>
            <person name="Fagiolini M."/>
            <person name="Faulkner G."/>
            <person name="Fletcher C.F."/>
            <person name="Fukushima T."/>
            <person name="Furuno M."/>
            <person name="Futaki S."/>
            <person name="Gariboldi M."/>
            <person name="Georgii-Hemming P."/>
            <person name="Gingeras T.R."/>
            <person name="Gojobori T."/>
            <person name="Green R.E."/>
            <person name="Gustincich S."/>
            <person name="Harbers M."/>
            <person name="Hayashi Y."/>
            <person name="Hensch T.K."/>
            <person name="Hirokawa N."/>
            <person name="Hill D."/>
            <person name="Huminiecki L."/>
            <person name="Iacono M."/>
            <person name="Ikeo K."/>
            <person name="Iwama A."/>
            <person name="Ishikawa T."/>
            <person name="Jakt M."/>
            <person name="Kanapin A."/>
            <person name="Katoh M."/>
            <person name="Kawasawa Y."/>
            <person name="Kelso J."/>
            <person name="Kitamura H."/>
            <person name="Kitano H."/>
            <person name="Kollias G."/>
            <person name="Krishnan S.P."/>
            <person name="Kruger A."/>
            <person name="Kummerfeld S.K."/>
            <person name="Kurochkin I.V."/>
            <person name="Lareau L.F."/>
            <person name="Lazarevic D."/>
            <person name="Lipovich L."/>
            <person name="Liu J."/>
            <person name="Liuni S."/>
            <person name="McWilliam S."/>
            <person name="Madan Babu M."/>
            <person name="Madera M."/>
            <person name="Marchionni L."/>
            <person name="Matsuda H."/>
            <person name="Matsuzawa S."/>
            <person name="Miki H."/>
            <person name="Mignone F."/>
            <person name="Miyake S."/>
            <person name="Morris K."/>
            <person name="Mottagui-Tabar S."/>
            <person name="Mulder N."/>
            <person name="Nakano N."/>
            <person name="Nakauchi H."/>
            <person name="Ng P."/>
            <person name="Nilsson R."/>
            <person name="Nishiguchi S."/>
            <person name="Nishikawa S."/>
            <person name="Nori F."/>
            <person name="Ohara O."/>
            <person name="Okazaki Y."/>
            <person name="Orlando V."/>
            <person name="Pang K.C."/>
            <person name="Pavan W.J."/>
            <person name="Pavesi G."/>
            <person name="Pesole G."/>
            <person name="Petrovsky N."/>
            <person name="Piazza S."/>
            <person name="Reed J."/>
            <person name="Reid J.F."/>
            <person name="Ring B.Z."/>
            <person name="Ringwald M."/>
            <person name="Rost B."/>
            <person name="Ruan Y."/>
            <person name="Salzberg S.L."/>
            <person name="Sandelin A."/>
            <person name="Schneider C."/>
            <person name="Schoenbach C."/>
            <person name="Sekiguchi K."/>
            <person name="Semple C.A."/>
            <person name="Seno S."/>
            <person name="Sessa L."/>
            <person name="Sheng Y."/>
            <person name="Shibata Y."/>
            <person name="Shimada H."/>
            <person name="Shimada K."/>
            <person name="Silva D."/>
            <person name="Sinclair B."/>
            <person name="Sperling S."/>
            <person name="Stupka E."/>
            <person name="Sugiura K."/>
            <person name="Sultana R."/>
            <person name="Takenaka Y."/>
            <person name="Taki K."/>
            <person name="Tammoja K."/>
            <person name="Tan S.L."/>
            <person name="Tang S."/>
            <person name="Taylor M.S."/>
            <person name="Tegner J."/>
            <person name="Teichmann S.A."/>
            <person name="Ueda H.R."/>
            <person name="van Nimwegen E."/>
            <person name="Verardo R."/>
            <person name="Wei C.L."/>
            <person name="Yagi K."/>
            <person name="Yamanishi H."/>
            <person name="Zabarovsky E."/>
            <person name="Zhu S."/>
            <person name="Zimmer A."/>
            <person name="Hide W."/>
            <person name="Bult C."/>
            <person name="Grimmond S.M."/>
            <person name="Teasdale R.D."/>
            <person name="Liu E.T."/>
            <person name="Brusic V."/>
            <person name="Quackenbush J."/>
            <person name="Wahlestedt C."/>
            <person name="Mattick J.S."/>
            <person name="Hume D.A."/>
            <person name="Kai C."/>
            <person name="Sasaki D."/>
            <person name="Tomaru Y."/>
            <person name="Fukuda S."/>
            <person name="Kanamori-Katayama M."/>
            <person name="Suzuki M."/>
            <person name="Aoki J."/>
            <person name="Arakawa T."/>
            <person name="Iida J."/>
            <person name="Imamura K."/>
            <person name="Itoh M."/>
            <person name="Kato T."/>
            <person name="Kawaji H."/>
            <person name="Kawagashira N."/>
            <person name="Kawashima T."/>
            <person name="Kojima M."/>
            <person name="Kondo S."/>
            <person name="Konno H."/>
            <person name="Nakano K."/>
            <person name="Ninomiya N."/>
            <person name="Nishio T."/>
            <person name="Okada M."/>
            <person name="Plessy C."/>
            <person name="Shibata K."/>
            <person name="Shiraki T."/>
            <person name="Suzuki S."/>
            <person name="Tagami M."/>
            <person name="Waki K."/>
            <person name="Watahiki A."/>
            <person name="Okamura-Oho Y."/>
            <person name="Suzuki H."/>
            <person name="Kawai J."/>
            <person name="Hayashizaki Y."/>
        </authorList>
    </citation>
    <scope>NUCLEOTIDE SEQUENCE [LARGE SCALE MRNA] (ISOFORM 1)</scope>
    <source>
        <tissue>Rathke gland</tissue>
    </source>
</reference>
<reference key="4">
    <citation type="submission" date="2005-09" db="EMBL/GenBank/DDBJ databases">
        <authorList>
            <person name="Mural R.J."/>
            <person name="Adams M.D."/>
            <person name="Myers E.W."/>
            <person name="Smith H.O."/>
            <person name="Venter J.C."/>
        </authorList>
    </citation>
    <scope>NUCLEOTIDE SEQUENCE [LARGE SCALE GENOMIC DNA]</scope>
</reference>
<reference key="5">
    <citation type="journal article" date="2004" name="Genome Res.">
        <title>The status, quality, and expansion of the NIH full-length cDNA project: the Mammalian Gene Collection (MGC).</title>
        <authorList>
            <consortium name="The MGC Project Team"/>
        </authorList>
    </citation>
    <scope>NUCLEOTIDE SEQUENCE [LARGE SCALE MRNA] (ISOFORM 1)</scope>
    <source>
        <tissue>Mammary tumor</tissue>
    </source>
</reference>
<reference key="6">
    <citation type="journal article" date="1998" name="Cell">
        <title>A calcineurin-dependent transcriptional pathway for cardiac hypertrophy.</title>
        <authorList>
            <person name="Molkentin J.D."/>
            <person name="Lu J.-R."/>
            <person name="Antos C.L."/>
            <person name="Markham B."/>
            <person name="Richardson J."/>
            <person name="Robbins J."/>
            <person name="Grant S.R."/>
            <person name="Olson E.N."/>
        </authorList>
    </citation>
    <scope>FUNCTION</scope>
    <scope>INTERACTION WITH GATA4</scope>
</reference>
<reference key="7">
    <citation type="journal article" date="2002" name="Mol. Cell. Biol.">
        <title>Targeted disruption of NFATc3, but not NFATc4, reveals an intrinsic defect in calcineurin-mediated cardiac hypertrophic growth.</title>
        <authorList>
            <person name="Wilkins B.J."/>
            <person name="De Windt L.J."/>
            <person name="Bueno O.F."/>
            <person name="Braz J.C."/>
            <person name="Glascock B.J."/>
            <person name="Kimball T.F."/>
            <person name="Molkentin J.D."/>
        </authorList>
    </citation>
    <scope>DISRUPTION PHENOTYPE</scope>
    <scope>TISSUE SPECIFICITY</scope>
</reference>
<reference key="8">
    <citation type="journal article" date="2003" name="Circ. Res.">
        <title>NFATc3 and NFATc4 are required for cardiac development and mitochondrial function.</title>
        <authorList>
            <person name="Bushdid P.B."/>
            <person name="Osinska H."/>
            <person name="Waclaw R.R."/>
            <person name="Molkentin J.D."/>
            <person name="Yutzey K.E."/>
        </authorList>
    </citation>
    <scope>FUNCTION</scope>
    <scope>DISRUPTION PHENOTYPE</scope>
</reference>
<reference key="9">
    <citation type="journal article" date="2007" name="Dev. Biol.">
        <title>Dosage-dependent transcriptional regulation by the calcineurin/NFAT signaling in developing myocardium transition.</title>
        <authorList>
            <person name="Yang X.Y."/>
            <person name="Yang T.T.C."/>
            <person name="Schubert W."/>
            <person name="Factor S.M."/>
            <person name="Chow C.-W."/>
        </authorList>
    </citation>
    <scope>FUNCTION</scope>
    <scope>DEVELOPMENTAL STAGE</scope>
</reference>
<reference key="10">
    <citation type="journal article" date="2007" name="J. Immunol.">
        <title>Selective role of NFATc3 in positive selection of thymocytes.</title>
        <authorList>
            <person name="Cante-Barrett K."/>
            <person name="Winslow M.M."/>
            <person name="Crabtree G.R."/>
        </authorList>
    </citation>
    <scope>TISSUE SPECIFICITY</scope>
</reference>
<reference key="11">
    <citation type="journal article" date="2008" name="J. Neurosci.">
        <title>Deafferentation-induced activation of NFAT (nuclear factor of activated T-cells) in cochlear nucleus neurons during a developmental critical period: a role for NFATc4-dependent apoptosis in the CNS.</title>
        <authorList>
            <person name="Luoma J.I."/>
            <person name="Zirpel L."/>
        </authorList>
    </citation>
    <scope>FUNCTION</scope>
    <scope>SUBCELLULAR LOCATION</scope>
    <scope>TISSUE SPECIFICITY</scope>
</reference>
<reference key="12">
    <citation type="journal article" date="2008" name="Mol. Immunol.">
        <title>The interleukin-1 receptor associated kinase 1 contributes to the regulation of NFAT.</title>
        <authorList>
            <person name="Wang D."/>
            <person name="Fasciano S."/>
            <person name="Li L."/>
        </authorList>
    </citation>
    <scope>PHOSPHORYLATION AT SER-168 AND SER-170</scope>
</reference>
<reference key="13">
    <citation type="journal article" date="2010" name="Cell">
        <title>A tissue-specific atlas of mouse protein phosphorylation and expression.</title>
        <authorList>
            <person name="Huttlin E.L."/>
            <person name="Jedrychowski M.P."/>
            <person name="Elias J.E."/>
            <person name="Goswami T."/>
            <person name="Rad R."/>
            <person name="Beausoleil S.A."/>
            <person name="Villen J."/>
            <person name="Haas W."/>
            <person name="Sowa M.E."/>
            <person name="Gygi S.P."/>
        </authorList>
    </citation>
    <scope>PHOSPHORYLATION [LARGE SCALE ANALYSIS] AT SER-289</scope>
    <scope>IDENTIFICATION BY MASS SPECTROMETRY [LARGE SCALE ANALYSIS]</scope>
    <source>
        <tissue>Kidney</tissue>
        <tissue>Lung</tissue>
    </source>
</reference>
<reference key="14">
    <citation type="journal article" date="2010" name="J. Cell. Mol. Med.">
        <title>Cross-talk between calcineurin/NFAT and Jak/STAT signalling induces cardioprotective alphaB-crystallin gene expression in response to hypertrophic stimuli.</title>
        <authorList>
            <person name="Manukyan I."/>
            <person name="Galatioto J."/>
            <person name="Mascareno E."/>
            <person name="Bhaduri S."/>
            <person name="Siddiqui M.A."/>
        </authorList>
    </citation>
    <scope>FUNCTION</scope>
    <scope>IDENTIFICATION IN A COMPLEX WITH NFATC3 AND STAT3</scope>
    <scope>TISSUE SPECIFICITY</scope>
    <scope>INDUCTION BY CALCINEURIN</scope>
</reference>
<reference key="15">
    <citation type="journal article" date="2011" name="Am. J. Pathol.">
        <title>Rescue of calcineurin Aalpha(-/-) mice reveals a novel role for the alpha isoform in the salivary gland.</title>
        <authorList>
            <person name="Reddy R.N."/>
            <person name="Pena J.A."/>
            <person name="Roberts B.R."/>
            <person name="Williams S.R."/>
            <person name="Price S.R."/>
            <person name="Gooch J.L."/>
        </authorList>
    </citation>
    <scope>TISSUE SPECIFICITY</scope>
</reference>
<reference key="16">
    <citation type="journal article" date="2012" name="Proc. Natl. Acad. Sci. U.S.A.">
        <title>Nuclear factor of activated T cells (NFATc4) is required for BDNF-dependent survival of adult-born neurons and spatial memory formation in the hippocampus.</title>
        <authorList>
            <person name="Quadrato G."/>
            <person name="Benevento M."/>
            <person name="Alber S."/>
            <person name="Jacob C."/>
            <person name="Floriddia E.M."/>
            <person name="Nguyen T."/>
            <person name="Elnaggar M.Y."/>
            <person name="Pedroarena C.M."/>
            <person name="Molkentin J.D."/>
            <person name="Di Giovanni S."/>
        </authorList>
    </citation>
    <scope>FUNCTION</scope>
    <scope>SUBCELLULAR LOCATION</scope>
    <scope>TISSUE SPECIFICITY</scope>
    <scope>DEVELOPMENTAL STAGE</scope>
    <scope>DISRUPTION PHENOTYPE</scope>
    <scope>INDUCTION BY BDNF</scope>
</reference>
<reference key="17">
    <citation type="journal article" date="2014" name="J. Innate Immun.">
        <title>The transcription factor nuclear factor of activated T cells c3 modulates the function of macrophages in sepsis.</title>
        <authorList>
            <person name="Ranjan R."/>
            <person name="Deng J."/>
            <person name="Chung S."/>
            <person name="Lee Y.G."/>
            <person name="Park G.Y."/>
            <person name="Xiao L."/>
            <person name="Joo M."/>
            <person name="Christman J.W."/>
            <person name="Karpurapu M."/>
        </authorList>
    </citation>
    <scope>SUBCELLULAR LOCATION</scope>
</reference>
<reference key="18">
    <citation type="journal article" date="2015" name="Neurochem. Res.">
        <title>Transcriptional regulation of BACE1 by NFAT3 leads to enhanced amyloidogenic processing.</title>
        <authorList>
            <person name="Mei Z."/>
            <person name="Yan P."/>
            <person name="Tan X."/>
            <person name="Zheng S."/>
            <person name="Situ B."/>
        </authorList>
    </citation>
    <scope>TISSUE SPECIFICITY</scope>
</reference>
<reference key="19">
    <citation type="journal article" date="2015" name="Cell Death Differ.">
        <title>Control of neuronal apoptosis by reciprocal regulation of NFATc3 and Trim17.</title>
        <authorList>
            <person name="Mojsa B."/>
            <person name="Mora S."/>
            <person name="Bossowski J.P."/>
            <person name="Lassot I."/>
            <person name="Desagher S."/>
        </authorList>
    </citation>
    <scope>INTERACTION WITH TRIM17</scope>
    <scope>SUBCELLULAR LOCATION</scope>
</reference>